<gene>
    <name type="primary">MT-CO2</name>
    <name type="synonym">COII</name>
    <name type="synonym">COX2</name>
    <name type="synonym">COXII</name>
    <name type="synonym">MTCO2</name>
</gene>
<geneLocation type="mitochondrion"/>
<dbReference type="EC" id="7.1.1.9"/>
<dbReference type="EMBL" id="DQ019082">
    <property type="protein sequence ID" value="ABA28338.1"/>
    <property type="molecule type" value="Genomic_DNA"/>
</dbReference>
<dbReference type="SMR" id="Q38S62"/>
<dbReference type="GO" id="GO:0005743">
    <property type="term" value="C:mitochondrial inner membrane"/>
    <property type="evidence" value="ECO:0007669"/>
    <property type="project" value="UniProtKB-SubCell"/>
</dbReference>
<dbReference type="GO" id="GO:0045277">
    <property type="term" value="C:respiratory chain complex IV"/>
    <property type="evidence" value="ECO:0000250"/>
    <property type="project" value="UniProtKB"/>
</dbReference>
<dbReference type="GO" id="GO:0005507">
    <property type="term" value="F:copper ion binding"/>
    <property type="evidence" value="ECO:0007669"/>
    <property type="project" value="InterPro"/>
</dbReference>
<dbReference type="GO" id="GO:0004129">
    <property type="term" value="F:cytochrome-c oxidase activity"/>
    <property type="evidence" value="ECO:0007669"/>
    <property type="project" value="UniProtKB-EC"/>
</dbReference>
<dbReference type="GO" id="GO:0042773">
    <property type="term" value="P:ATP synthesis coupled electron transport"/>
    <property type="evidence" value="ECO:0007669"/>
    <property type="project" value="TreeGrafter"/>
</dbReference>
<dbReference type="CDD" id="cd13912">
    <property type="entry name" value="CcO_II_C"/>
    <property type="match status" value="1"/>
</dbReference>
<dbReference type="FunFam" id="1.10.287.90:FF:000001">
    <property type="entry name" value="Cytochrome c oxidase subunit 2"/>
    <property type="match status" value="1"/>
</dbReference>
<dbReference type="FunFam" id="2.60.40.420:FF:000001">
    <property type="entry name" value="Cytochrome c oxidase subunit 2"/>
    <property type="match status" value="1"/>
</dbReference>
<dbReference type="Gene3D" id="1.10.287.90">
    <property type="match status" value="1"/>
</dbReference>
<dbReference type="Gene3D" id="2.60.40.420">
    <property type="entry name" value="Cupredoxins - blue copper proteins"/>
    <property type="match status" value="1"/>
</dbReference>
<dbReference type="InterPro" id="IPR045187">
    <property type="entry name" value="CcO_II"/>
</dbReference>
<dbReference type="InterPro" id="IPR002429">
    <property type="entry name" value="CcO_II-like_C"/>
</dbReference>
<dbReference type="InterPro" id="IPR034210">
    <property type="entry name" value="CcO_II_C"/>
</dbReference>
<dbReference type="InterPro" id="IPR001505">
    <property type="entry name" value="Copper_CuA"/>
</dbReference>
<dbReference type="InterPro" id="IPR008972">
    <property type="entry name" value="Cupredoxin"/>
</dbReference>
<dbReference type="InterPro" id="IPR014222">
    <property type="entry name" value="Cyt_c_oxidase_su2"/>
</dbReference>
<dbReference type="InterPro" id="IPR011759">
    <property type="entry name" value="Cyt_c_oxidase_su2_TM_dom"/>
</dbReference>
<dbReference type="InterPro" id="IPR036257">
    <property type="entry name" value="Cyt_c_oxidase_su2_TM_sf"/>
</dbReference>
<dbReference type="NCBIfam" id="TIGR02866">
    <property type="entry name" value="CoxB"/>
    <property type="match status" value="1"/>
</dbReference>
<dbReference type="PANTHER" id="PTHR22888:SF9">
    <property type="entry name" value="CYTOCHROME C OXIDASE SUBUNIT 2"/>
    <property type="match status" value="1"/>
</dbReference>
<dbReference type="PANTHER" id="PTHR22888">
    <property type="entry name" value="CYTOCHROME C OXIDASE, SUBUNIT II"/>
    <property type="match status" value="1"/>
</dbReference>
<dbReference type="Pfam" id="PF00116">
    <property type="entry name" value="COX2"/>
    <property type="match status" value="1"/>
</dbReference>
<dbReference type="Pfam" id="PF02790">
    <property type="entry name" value="COX2_TM"/>
    <property type="match status" value="1"/>
</dbReference>
<dbReference type="PRINTS" id="PR01166">
    <property type="entry name" value="CYCOXIDASEII"/>
</dbReference>
<dbReference type="SUPFAM" id="SSF49503">
    <property type="entry name" value="Cupredoxins"/>
    <property type="match status" value="1"/>
</dbReference>
<dbReference type="SUPFAM" id="SSF81464">
    <property type="entry name" value="Cytochrome c oxidase subunit II-like, transmembrane region"/>
    <property type="match status" value="1"/>
</dbReference>
<dbReference type="PROSITE" id="PS00078">
    <property type="entry name" value="COX2"/>
    <property type="match status" value="1"/>
</dbReference>
<dbReference type="PROSITE" id="PS50857">
    <property type="entry name" value="COX2_CUA"/>
    <property type="match status" value="1"/>
</dbReference>
<dbReference type="PROSITE" id="PS50999">
    <property type="entry name" value="COX2_TM"/>
    <property type="match status" value="1"/>
</dbReference>
<keyword id="KW-0186">Copper</keyword>
<keyword id="KW-0249">Electron transport</keyword>
<keyword id="KW-0460">Magnesium</keyword>
<keyword id="KW-0472">Membrane</keyword>
<keyword id="KW-0479">Metal-binding</keyword>
<keyword id="KW-0496">Mitochondrion</keyword>
<keyword id="KW-0999">Mitochondrion inner membrane</keyword>
<keyword id="KW-0679">Respiratory chain</keyword>
<keyword id="KW-1278">Translocase</keyword>
<keyword id="KW-0812">Transmembrane</keyword>
<keyword id="KW-1133">Transmembrane helix</keyword>
<keyword id="KW-0813">Transport</keyword>
<accession>Q38S62</accession>
<reference key="1">
    <citation type="journal article" date="2005" name="Mol. Phylogenet. Evol.">
        <title>Multigene phylogeny of the Old World mice, Murinae, reveals distinct geographic lineages and the declining utility of mitochondrial genes compared to nuclear genes.</title>
        <authorList>
            <person name="Steppan S.J."/>
            <person name="Adkins R.M."/>
            <person name="Spinks P.Q."/>
            <person name="Hale C."/>
        </authorList>
    </citation>
    <scope>NUCLEOTIDE SEQUENCE [GENOMIC DNA]</scope>
</reference>
<organism>
    <name type="scientific">Gerbillus gerbillus</name>
    <name type="common">Lesser Egyptian gerbil</name>
    <dbReference type="NCBI Taxonomy" id="298880"/>
    <lineage>
        <taxon>Eukaryota</taxon>
        <taxon>Metazoa</taxon>
        <taxon>Chordata</taxon>
        <taxon>Craniata</taxon>
        <taxon>Vertebrata</taxon>
        <taxon>Euteleostomi</taxon>
        <taxon>Mammalia</taxon>
        <taxon>Eutheria</taxon>
        <taxon>Euarchontoglires</taxon>
        <taxon>Glires</taxon>
        <taxon>Rodentia</taxon>
        <taxon>Myomorpha</taxon>
        <taxon>Muroidea</taxon>
        <taxon>Muridae</taxon>
        <taxon>Gerbillinae</taxon>
        <taxon>Gerbillus</taxon>
    </lineage>
</organism>
<evidence type="ECO:0000250" key="1">
    <source>
        <dbReference type="UniProtKB" id="P00403"/>
    </source>
</evidence>
<evidence type="ECO:0000250" key="2">
    <source>
        <dbReference type="UniProtKB" id="P00410"/>
    </source>
</evidence>
<evidence type="ECO:0000250" key="3">
    <source>
        <dbReference type="UniProtKB" id="P68530"/>
    </source>
</evidence>
<evidence type="ECO:0000305" key="4"/>
<feature type="chain" id="PRO_0000254921" description="Cytochrome c oxidase subunit 2">
    <location>
        <begin position="1"/>
        <end position="227"/>
    </location>
</feature>
<feature type="topological domain" description="Mitochondrial intermembrane" evidence="3">
    <location>
        <begin position="1"/>
        <end position="14"/>
    </location>
</feature>
<feature type="transmembrane region" description="Helical; Name=I" evidence="3">
    <location>
        <begin position="15"/>
        <end position="45"/>
    </location>
</feature>
<feature type="topological domain" description="Mitochondrial matrix" evidence="3">
    <location>
        <begin position="46"/>
        <end position="59"/>
    </location>
</feature>
<feature type="transmembrane region" description="Helical; Name=II" evidence="3">
    <location>
        <begin position="60"/>
        <end position="87"/>
    </location>
</feature>
<feature type="topological domain" description="Mitochondrial intermembrane" evidence="3">
    <location>
        <begin position="88"/>
        <end position="227"/>
    </location>
</feature>
<feature type="binding site" evidence="3">
    <location>
        <position position="161"/>
    </location>
    <ligand>
        <name>Cu cation</name>
        <dbReference type="ChEBI" id="CHEBI:23378"/>
        <label>A1</label>
    </ligand>
</feature>
<feature type="binding site" evidence="3">
    <location>
        <position position="196"/>
    </location>
    <ligand>
        <name>Cu cation</name>
        <dbReference type="ChEBI" id="CHEBI:23378"/>
        <label>A1</label>
    </ligand>
</feature>
<feature type="binding site" evidence="3">
    <location>
        <position position="196"/>
    </location>
    <ligand>
        <name>Cu cation</name>
        <dbReference type="ChEBI" id="CHEBI:23378"/>
        <label>A2</label>
    </ligand>
</feature>
<feature type="binding site" evidence="3">
    <location>
        <position position="198"/>
    </location>
    <ligand>
        <name>Cu cation</name>
        <dbReference type="ChEBI" id="CHEBI:23378"/>
        <label>A2</label>
    </ligand>
</feature>
<feature type="binding site" evidence="3">
    <location>
        <position position="198"/>
    </location>
    <ligand>
        <name>Mg(2+)</name>
        <dbReference type="ChEBI" id="CHEBI:18420"/>
        <note>ligand shared with MT-CO1</note>
    </ligand>
</feature>
<feature type="binding site" evidence="3">
    <location>
        <position position="200"/>
    </location>
    <ligand>
        <name>Cu cation</name>
        <dbReference type="ChEBI" id="CHEBI:23378"/>
        <label>A1</label>
    </ligand>
</feature>
<feature type="binding site" evidence="3">
    <location>
        <position position="200"/>
    </location>
    <ligand>
        <name>Cu cation</name>
        <dbReference type="ChEBI" id="CHEBI:23378"/>
        <label>A2</label>
    </ligand>
</feature>
<feature type="binding site" evidence="3">
    <location>
        <position position="204"/>
    </location>
    <ligand>
        <name>Cu cation</name>
        <dbReference type="ChEBI" id="CHEBI:23378"/>
        <label>A2</label>
    </ligand>
</feature>
<feature type="binding site" evidence="3">
    <location>
        <position position="207"/>
    </location>
    <ligand>
        <name>Cu cation</name>
        <dbReference type="ChEBI" id="CHEBI:23378"/>
        <label>A1</label>
    </ligand>
</feature>
<proteinExistence type="inferred from homology"/>
<comment type="function">
    <text evidence="2">Component of the cytochrome c oxidase, the last enzyme in the mitochondrial electron transport chain which drives oxidative phosphorylation. The respiratory chain contains 3 multisubunit complexes succinate dehydrogenase (complex II, CII), ubiquinol-cytochrome c oxidoreductase (cytochrome b-c1 complex, complex III, CIII) and cytochrome c oxidase (complex IV, CIV), that cooperate to transfer electrons derived from NADH and succinate to molecular oxygen, creating an electrochemical gradient over the inner membrane that drives transmembrane transport and the ATP synthase. Cytochrome c oxidase is the component of the respiratory chain that catalyzes the reduction of oxygen to water. Electrons originating from reduced cytochrome c in the intermembrane space (IMS) are transferred via the dinuclear copper A center (CU(A)) of subunit 2 and heme A of subunit 1 to the active site in subunit 1, a binuclear center (BNC) formed by heme A3 and copper B (CU(B)). The BNC reduces molecular oxygen to 2 water molecules using 4 electrons from cytochrome c in the IMS and 4 protons from the mitochondrial matrix.</text>
</comment>
<comment type="catalytic activity">
    <reaction evidence="2">
        <text>4 Fe(II)-[cytochrome c] + O2 + 8 H(+)(in) = 4 Fe(III)-[cytochrome c] + 2 H2O + 4 H(+)(out)</text>
        <dbReference type="Rhea" id="RHEA:11436"/>
        <dbReference type="Rhea" id="RHEA-COMP:10350"/>
        <dbReference type="Rhea" id="RHEA-COMP:14399"/>
        <dbReference type="ChEBI" id="CHEBI:15377"/>
        <dbReference type="ChEBI" id="CHEBI:15378"/>
        <dbReference type="ChEBI" id="CHEBI:15379"/>
        <dbReference type="ChEBI" id="CHEBI:29033"/>
        <dbReference type="ChEBI" id="CHEBI:29034"/>
        <dbReference type="EC" id="7.1.1.9"/>
    </reaction>
    <physiologicalReaction direction="left-to-right" evidence="2">
        <dbReference type="Rhea" id="RHEA:11437"/>
    </physiologicalReaction>
</comment>
<comment type="cofactor">
    <cofactor evidence="3">
        <name>Cu cation</name>
        <dbReference type="ChEBI" id="CHEBI:23378"/>
    </cofactor>
    <text evidence="3">Binds a dinuclear copper A center per subunit.</text>
</comment>
<comment type="subunit">
    <text evidence="1 3">Component of the cytochrome c oxidase (complex IV, CIV), a multisubunit enzyme composed of 14 subunits. The complex is composed of a catalytic core of 3 subunits MT-CO1, MT-CO2 and MT-CO3, encoded in the mitochondrial DNA, and 11 supernumerary subunits COX4I, COX5A, COX5B, COX6A, COX6B, COX6C, COX7A, COX7B, COX7C, COX8 and NDUFA4, which are encoded in the nuclear genome. The complex exists as a monomer or a dimer and forms supercomplexes (SCs) in the inner mitochondrial membrane with NADH-ubiquinone oxidoreductase (complex I, CI) and ubiquinol-cytochrome c oxidoreductase (cytochrome b-c1 complex, complex III, CIII), resulting in different assemblies (supercomplex SCI(1)III(2)IV(1) and megacomplex MCI(2)III(2)IV(2)) (By similarity). Found in a complex with TMEM177, COA6, COX18, COX20, SCO1 and SCO2. Interacts with TMEM177 in a COX20-dependent manner. Interacts with COX20. Interacts with COX16 (By similarity).</text>
</comment>
<comment type="subcellular location">
    <subcellularLocation>
        <location evidence="3">Mitochondrion inner membrane</location>
        <topology evidence="3">Multi-pass membrane protein</topology>
    </subcellularLocation>
</comment>
<comment type="similarity">
    <text evidence="4">Belongs to the cytochrome c oxidase subunit 2 family.</text>
</comment>
<protein>
    <recommendedName>
        <fullName>Cytochrome c oxidase subunit 2</fullName>
        <ecNumber>7.1.1.9</ecNumber>
    </recommendedName>
    <alternativeName>
        <fullName>Cytochrome c oxidase polypeptide II</fullName>
    </alternativeName>
</protein>
<name>COX2_GERGE</name>
<sequence>MAYPFQLGLQDASSPIMEELMNFHDHTLMIVFLISSLVLYLMALMLSTKLIHTSTMDAQEVETIWTILPAIILIMIALPSLRILYMMDEINNPILTVKTMGHQWYWSYEYTDYEDLCFDSYMIPTNELKPGELRLLEVDNRIVLPMELPIRMLISSEDVLHSWAVPSLGLKTDAIPGRLNQATITSNRPGVFYGQCSEICGSNHSFMPIVLEMIPLKLFENWSMSMT</sequence>